<keyword id="KW-0256">Endoplasmic reticulum</keyword>
<keyword id="KW-0337">GPI-anchor biosynthesis</keyword>
<keyword id="KW-0472">Membrane</keyword>
<keyword id="KW-1185">Reference proteome</keyword>
<keyword id="KW-0812">Transmembrane</keyword>
<keyword id="KW-1133">Transmembrane helix</keyword>
<organism>
    <name type="scientific">Bos taurus</name>
    <name type="common">Bovine</name>
    <dbReference type="NCBI Taxonomy" id="9913"/>
    <lineage>
        <taxon>Eukaryota</taxon>
        <taxon>Metazoa</taxon>
        <taxon>Chordata</taxon>
        <taxon>Craniata</taxon>
        <taxon>Vertebrata</taxon>
        <taxon>Euteleostomi</taxon>
        <taxon>Mammalia</taxon>
        <taxon>Eutheria</taxon>
        <taxon>Laurasiatheria</taxon>
        <taxon>Artiodactyla</taxon>
        <taxon>Ruminantia</taxon>
        <taxon>Pecora</taxon>
        <taxon>Bovidae</taxon>
        <taxon>Bovinae</taxon>
        <taxon>Bos</taxon>
    </lineage>
</organism>
<accession>Q3ZBX1</accession>
<name>PIGC_BOVIN</name>
<comment type="function">
    <text evidence="1">Part of the glycosylphosphatidylinositol-N-acetylglucosaminyltransferase (GPI-GnT) complex that catalyzes the transfer of N-acetylglucosamine from UDP-N-acetylglucosamine to phosphatidylinositol and participates in the first step of GPI biosynthesis.</text>
</comment>
<comment type="pathway">
    <text evidence="1">Glycolipid biosynthesis; glycosylphosphatidylinositol-anchor biosynthesis.</text>
</comment>
<comment type="subunit">
    <text evidence="1">Component of the glycosylphosphatidylinositol-N-acetylglucosaminyltransferase (GPI-GnT) complex composed at least by PIGA, PIGC, PIGH, PIGP, PIGQ, PIGY and DPM2. Interacts with PIGQ. Interacts with the heterodimer PIGA:PIGH.</text>
</comment>
<comment type="subcellular location">
    <subcellularLocation>
        <location evidence="1">Endoplasmic reticulum membrane</location>
        <topology evidence="1">Multi-pass membrane protein</topology>
    </subcellularLocation>
</comment>
<comment type="similarity">
    <text evidence="3">Belongs to the PIGC family.</text>
</comment>
<feature type="chain" id="PRO_0000365731" description="Phosphatidylinositol N-acetylglucosaminyltransferase subunit C">
    <location>
        <begin position="1"/>
        <end position="297"/>
    </location>
</feature>
<feature type="transmembrane region" description="Helical" evidence="2">
    <location>
        <begin position="67"/>
        <end position="87"/>
    </location>
</feature>
<feature type="transmembrane region" description="Helical" evidence="2">
    <location>
        <begin position="88"/>
        <end position="108"/>
    </location>
</feature>
<feature type="transmembrane region" description="Helical" evidence="2">
    <location>
        <begin position="153"/>
        <end position="173"/>
    </location>
</feature>
<feature type="transmembrane region" description="Helical" evidence="2">
    <location>
        <begin position="239"/>
        <end position="259"/>
    </location>
</feature>
<sequence length="297" mass="33628">MCAQPVANTKEVRWQKVLYERQPFPDNYVDRRFLEELRKNIYARKYQYWAVVFESSVVIQQLCSVCVFVVIWWYMDEGLLAPQWLFGTGLASSLIGYVLFDFIDGGEGRKKSGRTRWADLKSALVFITFTYGFSPVLKTLTESVSTDTIYAMAVFMLLGHLIFFDYGANAAIVSSTLSLNMAIFASVCLASRLPRSLHAFIMVTFAIQIFALWPMLQKKLKACTPRSYVGVTLLFAFSALGGLLSISAVGAILFALLLISISCLCPFYLIRLQLFKENIHGPWDEAEIKEDLSRFLS</sequence>
<dbReference type="EMBL" id="BC103058">
    <property type="protein sequence ID" value="AAI03059.1"/>
    <property type="molecule type" value="mRNA"/>
</dbReference>
<dbReference type="RefSeq" id="NP_001029555.1">
    <property type="nucleotide sequence ID" value="NM_001034383.1"/>
</dbReference>
<dbReference type="RefSeq" id="XP_005216956.1">
    <property type="nucleotide sequence ID" value="XM_005216899.3"/>
</dbReference>
<dbReference type="FunCoup" id="Q3ZBX1">
    <property type="interactions" value="3991"/>
</dbReference>
<dbReference type="STRING" id="9913.ENSBTAP00000034036"/>
<dbReference type="PaxDb" id="9913-ENSBTAP00000034036"/>
<dbReference type="Ensembl" id="ENSBTAT00000034135.3">
    <property type="protein sequence ID" value="ENSBTAP00000034036.1"/>
    <property type="gene ID" value="ENSBTAG00000024542.3"/>
</dbReference>
<dbReference type="Ensembl" id="ENSBTAT00000104702.1">
    <property type="protein sequence ID" value="ENSBTAP00000074999.1"/>
    <property type="gene ID" value="ENSBTAG00000024542.3"/>
</dbReference>
<dbReference type="GeneID" id="510483"/>
<dbReference type="KEGG" id="bta:510483"/>
<dbReference type="CTD" id="5279"/>
<dbReference type="VEuPathDB" id="HostDB:ENSBTAG00000024542"/>
<dbReference type="eggNOG" id="KOG3059">
    <property type="taxonomic scope" value="Eukaryota"/>
</dbReference>
<dbReference type="GeneTree" id="ENSGT00390000005496"/>
<dbReference type="HOGENOM" id="CLU_024002_0_0_1"/>
<dbReference type="InParanoid" id="Q3ZBX1"/>
<dbReference type="OMA" id="STSYHAF"/>
<dbReference type="OrthoDB" id="196709at2759"/>
<dbReference type="TreeFam" id="TF314325"/>
<dbReference type="Reactome" id="R-BTA-162710">
    <property type="pathway name" value="Synthesis of glycosylphosphatidylinositol (GPI)"/>
</dbReference>
<dbReference type="UniPathway" id="UPA00196"/>
<dbReference type="Proteomes" id="UP000009136">
    <property type="component" value="Chromosome 16"/>
</dbReference>
<dbReference type="Bgee" id="ENSBTAG00000024542">
    <property type="expression patterns" value="Expressed in biceps femoris and 106 other cell types or tissues"/>
</dbReference>
<dbReference type="GO" id="GO:0000506">
    <property type="term" value="C:glycosylphosphatidylinositol-N-acetylglucosaminyltransferase (GPI-GnT) complex"/>
    <property type="evidence" value="ECO:0000250"/>
    <property type="project" value="UniProtKB"/>
</dbReference>
<dbReference type="GO" id="GO:0006506">
    <property type="term" value="P:GPI anchor biosynthetic process"/>
    <property type="evidence" value="ECO:0000250"/>
    <property type="project" value="UniProtKB"/>
</dbReference>
<dbReference type="InterPro" id="IPR009450">
    <property type="entry name" value="Plno_GlcNAc_GPI2"/>
</dbReference>
<dbReference type="PANTHER" id="PTHR12982">
    <property type="entry name" value="PHOSPHATIDYLINOSITOL GLYCAN, CLASS C"/>
    <property type="match status" value="1"/>
</dbReference>
<dbReference type="PANTHER" id="PTHR12982:SF0">
    <property type="entry name" value="PHOSPHATIDYLINOSITOL N-ACETYLGLUCOSAMINYLTRANSFERASE SUBUNIT C"/>
    <property type="match status" value="1"/>
</dbReference>
<dbReference type="Pfam" id="PF06432">
    <property type="entry name" value="GPI2"/>
    <property type="match status" value="1"/>
</dbReference>
<dbReference type="PIRSF" id="PIRSF016104">
    <property type="entry name" value="GPI2"/>
    <property type="match status" value="1"/>
</dbReference>
<evidence type="ECO:0000250" key="1">
    <source>
        <dbReference type="UniProtKB" id="Q92535"/>
    </source>
</evidence>
<evidence type="ECO:0000255" key="2"/>
<evidence type="ECO:0000305" key="3"/>
<reference key="1">
    <citation type="submission" date="2005-08" db="EMBL/GenBank/DDBJ databases">
        <authorList>
            <consortium name="NIH - Mammalian Gene Collection (MGC) project"/>
        </authorList>
    </citation>
    <scope>NUCLEOTIDE SEQUENCE [LARGE SCALE MRNA]</scope>
    <source>
        <strain>Hereford</strain>
        <tissue>Fetal liver</tissue>
    </source>
</reference>
<protein>
    <recommendedName>
        <fullName evidence="1">Phosphatidylinositol N-acetylglucosaminyltransferase subunit C</fullName>
    </recommendedName>
    <alternativeName>
        <fullName>Phosphatidylinositol-glycan biosynthesis class C protein</fullName>
        <shortName>PIG-C</shortName>
    </alternativeName>
</protein>
<proteinExistence type="evidence at transcript level"/>
<gene>
    <name evidence="1" type="primary">PIGC</name>
</gene>